<reference key="1">
    <citation type="submission" date="2007-09" db="EMBL/GenBank/DDBJ databases">
        <title>The NIAID influenza genome sequencing project.</title>
        <authorList>
            <person name="Spiro D."/>
            <person name="Sengamalay N."/>
            <person name="Boyne A."/>
            <person name="Bera J."/>
            <person name="Zaborsky J."/>
            <person name="Subbu V."/>
            <person name="Sparenborg J."/>
            <person name="Gallagher T."/>
            <person name="Overton L."/>
            <person name="Althoff R."/>
            <person name="Liu X."/>
            <person name="Ghedin E."/>
            <person name="Sitz J."/>
            <person name="Katzel D."/>
            <person name="Neupane R."/>
            <person name="Shumway M."/>
            <person name="Koo H."/>
            <person name="Edelman L."/>
            <person name="Menegus M."/>
            <person name="Mayer C."/>
            <person name="Dale S."/>
            <person name="Bao Y."/>
            <person name="Bolotov P."/>
            <person name="Dernovoy D."/>
            <person name="Kiryutin B."/>
            <person name="Lipman D.J."/>
            <person name="Tatusova T."/>
        </authorList>
    </citation>
    <scope>NUCLEOTIDE SEQUENCE [GENOMIC RNA] OF 1-496</scope>
</reference>
<reference key="2">
    <citation type="submission" date="2007-09" db="EMBL/GenBank/DDBJ databases">
        <authorList>
            <consortium name="The NIAID Influenza Genome Sequencing Consortium"/>
        </authorList>
    </citation>
    <scope>NUCLEOTIDE SEQUENCE [GENOMIC RNA] OF 1-496</scope>
</reference>
<accession>A8C8J8</accession>
<dbReference type="EMBL" id="CY026214">
    <property type="protein sequence ID" value="ABV45930.1"/>
    <property type="molecule type" value="Viral_cRNA"/>
</dbReference>
<dbReference type="SMR" id="A8C8J8"/>
<dbReference type="Proteomes" id="UP001395887">
    <property type="component" value="Genome"/>
</dbReference>
<dbReference type="GO" id="GO:0019029">
    <property type="term" value="C:helical viral capsid"/>
    <property type="evidence" value="ECO:0007669"/>
    <property type="project" value="UniProtKB-UniRule"/>
</dbReference>
<dbReference type="GO" id="GO:0043657">
    <property type="term" value="C:host cell"/>
    <property type="evidence" value="ECO:0007669"/>
    <property type="project" value="GOC"/>
</dbReference>
<dbReference type="GO" id="GO:0042025">
    <property type="term" value="C:host cell nucleus"/>
    <property type="evidence" value="ECO:0007669"/>
    <property type="project" value="UniProtKB-SubCell"/>
</dbReference>
<dbReference type="GO" id="GO:1990904">
    <property type="term" value="C:ribonucleoprotein complex"/>
    <property type="evidence" value="ECO:0007669"/>
    <property type="project" value="UniProtKB-KW"/>
</dbReference>
<dbReference type="GO" id="GO:0019013">
    <property type="term" value="C:viral nucleocapsid"/>
    <property type="evidence" value="ECO:0007669"/>
    <property type="project" value="UniProtKB-UniRule"/>
</dbReference>
<dbReference type="GO" id="GO:0003723">
    <property type="term" value="F:RNA binding"/>
    <property type="evidence" value="ECO:0007669"/>
    <property type="project" value="UniProtKB-UniRule"/>
</dbReference>
<dbReference type="GO" id="GO:0005198">
    <property type="term" value="F:structural molecule activity"/>
    <property type="evidence" value="ECO:0007669"/>
    <property type="project" value="UniProtKB-UniRule"/>
</dbReference>
<dbReference type="GO" id="GO:0046718">
    <property type="term" value="P:symbiont entry into host cell"/>
    <property type="evidence" value="ECO:0007669"/>
    <property type="project" value="UniProtKB-KW"/>
</dbReference>
<dbReference type="GO" id="GO:0075732">
    <property type="term" value="P:viral penetration into host nucleus"/>
    <property type="evidence" value="ECO:0007669"/>
    <property type="project" value="UniProtKB-UniRule"/>
</dbReference>
<dbReference type="HAMAP" id="MF_04070">
    <property type="entry name" value="INFV_NCAP"/>
    <property type="match status" value="1"/>
</dbReference>
<dbReference type="InterPro" id="IPR002141">
    <property type="entry name" value="Flu_NP"/>
</dbReference>
<dbReference type="Pfam" id="PF00506">
    <property type="entry name" value="Flu_NP"/>
    <property type="match status" value="1"/>
</dbReference>
<dbReference type="SUPFAM" id="SSF161003">
    <property type="entry name" value="flu NP-like"/>
    <property type="match status" value="1"/>
</dbReference>
<sequence length="498" mass="55955">MASQGTKRSYEQMETDGERQNATEIRASVGRMIGGIGRFYIQMCTELKLNDYEGRLIQNSLTIERMVLSAFDERRNKYLEEHPSAGKDPKKTGGPIYKRVDGKWVRELVLYDKEEIRRIWRQANNGDDATAGLTHIMIWHSNLNDTTYQRTRALVRTGMDPRMCSLMQGSTLPRRSGAAGAAVKGVGTMVLELIRMIKRGINDRNFWRGENGRKTRIAYERMCNILKGKFQTAAQKAMMDQVRESRNPGNAEIEDLTFLARSALILRGSVAHKSCLPACVYGPAVASGYDFEKEGYSLVGVDPFKLLQTSQVYSLIRPNENPAHKSQLVWMACNSAAFEDLRVSSFIRGTRVLPRGKLSTRGVQIASNENMDAIVSSTLELRSRYWAIRTRSGGNTNQQRASAGQISTQPTFSVQRNLPFDKATIMAAFTGNTEGRTSDMRAEIIKMMESARPEEVSFQGRGVFELSDERATNPIVPSFDMSNEGSYFFGDNAEEYDN</sequence>
<comment type="function">
    <text evidence="1">Encapsidates the negative strand viral RNA, protecting it from nucleases. The encapsidated genomic RNA is termed the ribonucleoprotein (RNP) and serves as template for transcription and replication. The RNP needs to be localized in the host nucleus to start an infectious cycle, but is too large to diffuse through the nuclear pore complex. NP comprises at least 2 nuclear localization signals that are responsible for the active RNP import into the nucleus through cellular importin alpha/beta pathway. Later in the infection, nclear export of RNPs are mediated through viral proteins NEP interacting with M1 which binds nucleoproteins. It is possible that nucleoprotein binds directly host exportin-1/XPO1 and plays an active role in RNPs nuclear export. M1 interaction with RNP seems to hide nucleoprotein's nuclear localization signals. Soon after a virion infects a new cell, M1 dissociates from the RNP under acidification of the virion driven by M2 protein. Dissociation of M1 from RNP unmasks nucleoprotein's nuclear localization signals, targeting the RNP to the nucleus.</text>
</comment>
<comment type="subunit">
    <text evidence="1">Homomultimerizes to form the nucleocapsid. May bind host exportin-1/XPO1. Binds to viral genomic RNA. Protein-RNA contacts are mediated by a combination of electrostatic interactions between positively charged residues and the phosphate backbone and planar interactions between aromatic side chains and bases.</text>
</comment>
<comment type="subcellular location">
    <subcellularLocation>
        <location evidence="1">Virion</location>
    </subcellularLocation>
    <subcellularLocation>
        <location evidence="1">Host nucleus</location>
    </subcellularLocation>
</comment>
<comment type="PTM">
    <text evidence="1">Late in virus-infected cells, may be cleaved from a 56-kDa protein to a 53-kDa protein by a cellular caspase. This cleavage might be a marker for the onset of apoptosis in infected cells or have a specific function in virus host interaction.</text>
</comment>
<comment type="similarity">
    <text evidence="1">Belongs to the influenza viruses nucleoprotein family.</text>
</comment>
<keyword id="KW-0167">Capsid protein</keyword>
<keyword id="KW-1139">Helical capsid protein</keyword>
<keyword id="KW-1048">Host nucleus</keyword>
<keyword id="KW-0945">Host-virus interaction</keyword>
<keyword id="KW-0687">Ribonucleoprotein</keyword>
<keyword id="KW-0694">RNA-binding</keyword>
<keyword id="KW-0543">Viral nucleoprotein</keyword>
<keyword id="KW-1163">Viral penetration into host nucleus</keyword>
<keyword id="KW-0946">Virion</keyword>
<keyword id="KW-1160">Virus entry into host cell</keyword>
<name>NCAP_I07A0</name>
<protein>
    <recommendedName>
        <fullName evidence="1">Nucleoprotein</fullName>
    </recommendedName>
    <alternativeName>
        <fullName evidence="1">Nucleocapsid protein</fullName>
        <shortName evidence="1">Protein N</shortName>
    </alternativeName>
</protein>
<feature type="chain" id="PRO_0000372933" description="Nucleoprotein">
    <location>
        <begin position="1"/>
        <end position="498"/>
    </location>
</feature>
<feature type="region of interest" description="Disordered" evidence="2">
    <location>
        <begin position="1"/>
        <end position="21"/>
    </location>
</feature>
<feature type="short sequence motif" description="Unconventional nuclear localization signal" evidence="1">
    <location>
        <begin position="1"/>
        <end position="18"/>
    </location>
</feature>
<feature type="short sequence motif" description="Bipartite nuclear localization signal" evidence="1">
    <location>
        <begin position="198"/>
        <end position="216"/>
    </location>
</feature>
<feature type="compositionally biased region" description="Basic and acidic residues" evidence="2">
    <location>
        <begin position="8"/>
        <end position="21"/>
    </location>
</feature>
<evidence type="ECO:0000255" key="1">
    <source>
        <dbReference type="HAMAP-Rule" id="MF_04070"/>
    </source>
</evidence>
<evidence type="ECO:0000256" key="2">
    <source>
        <dbReference type="SAM" id="MobiDB-lite"/>
    </source>
</evidence>
<proteinExistence type="inferred from homology"/>
<gene>
    <name evidence="1" type="primary">NP</name>
</gene>
<organism>
    <name type="scientific">Influenza A virus (strain A/USA:Texas/UR06-0195/2007 H1N1)</name>
    <dbReference type="NCBI Taxonomy" id="455880"/>
    <lineage>
        <taxon>Viruses</taxon>
        <taxon>Riboviria</taxon>
        <taxon>Orthornavirae</taxon>
        <taxon>Negarnaviricota</taxon>
        <taxon>Polyploviricotina</taxon>
        <taxon>Insthoviricetes</taxon>
        <taxon>Articulavirales</taxon>
        <taxon>Orthomyxoviridae</taxon>
        <taxon>Alphainfluenzavirus</taxon>
        <taxon>Alphainfluenzavirus influenzae</taxon>
        <taxon>Influenza A virus</taxon>
    </lineage>
</organism>
<organismHost>
    <name type="scientific">Aves</name>
    <dbReference type="NCBI Taxonomy" id="8782"/>
</organismHost>
<organismHost>
    <name type="scientific">Homo sapiens</name>
    <name type="common">Human</name>
    <dbReference type="NCBI Taxonomy" id="9606"/>
</organismHost>
<organismHost>
    <name type="scientific">Sus scrofa</name>
    <name type="common">Pig</name>
    <dbReference type="NCBI Taxonomy" id="9823"/>
</organismHost>